<feature type="signal peptide" evidence="2">
    <location>
        <begin position="1"/>
        <end position="19"/>
    </location>
</feature>
<feature type="chain" id="PRO_0000014515" description="Amphoterin-induced protein 3" evidence="2">
    <location>
        <begin position="20"/>
        <end position="508"/>
    </location>
</feature>
<feature type="topological domain" description="Extracellular" evidence="2">
    <location>
        <begin position="20"/>
        <end position="383"/>
    </location>
</feature>
<feature type="transmembrane region" description="Helical" evidence="2">
    <location>
        <begin position="384"/>
        <end position="404"/>
    </location>
</feature>
<feature type="topological domain" description="Cytoplasmic" evidence="2">
    <location>
        <begin position="405"/>
        <end position="508"/>
    </location>
</feature>
<feature type="domain" description="LRRNT">
    <location>
        <begin position="25"/>
        <end position="61"/>
    </location>
</feature>
<feature type="repeat" description="LRR 1">
    <location>
        <begin position="62"/>
        <end position="83"/>
    </location>
</feature>
<feature type="repeat" description="LRR 2">
    <location>
        <begin position="86"/>
        <end position="107"/>
    </location>
</feature>
<feature type="repeat" description="LRR 3">
    <location>
        <begin position="110"/>
        <end position="131"/>
    </location>
</feature>
<feature type="repeat" description="LRR 4">
    <location>
        <begin position="134"/>
        <end position="155"/>
    </location>
</feature>
<feature type="repeat" description="LRR 5">
    <location>
        <begin position="158"/>
        <end position="178"/>
    </location>
</feature>
<feature type="repeat" description="LRR 6">
    <location>
        <begin position="184"/>
        <end position="207"/>
    </location>
</feature>
<feature type="domain" description="LRRCT">
    <location>
        <begin position="219"/>
        <end position="275"/>
    </location>
</feature>
<feature type="domain" description="Ig-like C2-type" evidence="2">
    <location>
        <begin position="279"/>
        <end position="370"/>
    </location>
</feature>
<feature type="glycosylation site" description="N-linked (GlcNAc...) asparagine" evidence="2">
    <location>
        <position position="107"/>
    </location>
</feature>
<feature type="glycosylation site" description="N-linked (GlcNAc...) asparagine" evidence="2">
    <location>
        <position position="272"/>
    </location>
</feature>
<feature type="glycosylation site" description="N-linked (GlcNAc...) asparagine" evidence="2">
    <location>
        <position position="301"/>
    </location>
</feature>
<feature type="glycosylation site" description="N-linked (GlcNAc...) asparagine" evidence="2">
    <location>
        <position position="362"/>
    </location>
</feature>
<feature type="glycosylation site" description="N-linked (GlcNAc...) asparagine" evidence="2">
    <location>
        <position position="368"/>
    </location>
</feature>
<feature type="disulfide bond" evidence="3">
    <location>
        <begin position="34"/>
        <end position="40"/>
    </location>
</feature>
<feature type="disulfide bond" evidence="3">
    <location>
        <begin position="38"/>
        <end position="47"/>
    </location>
</feature>
<feature type="disulfide bond" evidence="3">
    <location>
        <begin position="223"/>
        <end position="251"/>
    </location>
</feature>
<feature type="disulfide bond" evidence="3">
    <location>
        <begin position="225"/>
        <end position="273"/>
    </location>
</feature>
<feature type="disulfide bond" evidence="3">
    <location>
        <begin position="300"/>
        <end position="352"/>
    </location>
</feature>
<dbReference type="EMBL" id="AY237731">
    <property type="protein sequence ID" value="AAO48952.1"/>
    <property type="molecule type" value="mRNA"/>
</dbReference>
<dbReference type="RefSeq" id="NP_835280.1">
    <property type="nucleotide sequence ID" value="NM_178144.1"/>
</dbReference>
<dbReference type="SMR" id="Q80ZD5"/>
<dbReference type="FunCoup" id="Q80ZD5">
    <property type="interactions" value="69"/>
</dbReference>
<dbReference type="GlyCosmos" id="Q80ZD5">
    <property type="glycosylation" value="5 sites, No reported glycans"/>
</dbReference>
<dbReference type="GlyGen" id="Q80ZD5">
    <property type="glycosylation" value="5 sites"/>
</dbReference>
<dbReference type="PhosphoSitePlus" id="Q80ZD5"/>
<dbReference type="Ensembl" id="ENSRNOT00000100102.1">
    <property type="protein sequence ID" value="ENSRNOP00000093720.1"/>
    <property type="gene ID" value="ENSRNOG00000064183.1"/>
</dbReference>
<dbReference type="Ensembl" id="ENSRNOT00000101890.1">
    <property type="protein sequence ID" value="ENSRNOP00000082203.1"/>
    <property type="gene ID" value="ENSRNOG00000064183.1"/>
</dbReference>
<dbReference type="Ensembl" id="ENSRNOT00000114148.1">
    <property type="protein sequence ID" value="ENSRNOP00000076680.1"/>
    <property type="gene ID" value="ENSRNOG00000064183.1"/>
</dbReference>
<dbReference type="Ensembl" id="ENSRNOT00000118165.1">
    <property type="protein sequence ID" value="ENSRNOP00000081738.1"/>
    <property type="gene ID" value="ENSRNOG00000064183.1"/>
</dbReference>
<dbReference type="GeneID" id="316003"/>
<dbReference type="KEGG" id="rno:316003"/>
<dbReference type="UCSC" id="RGD:631413">
    <property type="organism name" value="rat"/>
</dbReference>
<dbReference type="AGR" id="RGD:631413"/>
<dbReference type="CTD" id="386724"/>
<dbReference type="RGD" id="631413">
    <property type="gene designation" value="Amigo3"/>
</dbReference>
<dbReference type="GeneTree" id="ENSGT00950000183146"/>
<dbReference type="InParanoid" id="Q80ZD5"/>
<dbReference type="OMA" id="TPCRCPP"/>
<dbReference type="OrthoDB" id="55572at9989"/>
<dbReference type="PhylomeDB" id="Q80ZD5"/>
<dbReference type="PRO" id="PR:Q80ZD5"/>
<dbReference type="Proteomes" id="UP000002494">
    <property type="component" value="Chromosome 8"/>
</dbReference>
<dbReference type="GO" id="GO:0016020">
    <property type="term" value="C:membrane"/>
    <property type="evidence" value="ECO:0000318"/>
    <property type="project" value="GO_Central"/>
</dbReference>
<dbReference type="GO" id="GO:0044877">
    <property type="term" value="F:protein-containing complex binding"/>
    <property type="evidence" value="ECO:0000353"/>
    <property type="project" value="RGD"/>
</dbReference>
<dbReference type="GO" id="GO:0007420">
    <property type="term" value="P:brain development"/>
    <property type="evidence" value="ECO:0000318"/>
    <property type="project" value="GO_Central"/>
</dbReference>
<dbReference type="GO" id="GO:0007157">
    <property type="term" value="P:heterophilic cell-cell adhesion via plasma membrane cell adhesion molecules"/>
    <property type="evidence" value="ECO:0000353"/>
    <property type="project" value="UniProtKB"/>
</dbReference>
<dbReference type="GO" id="GO:0010977">
    <property type="term" value="P:negative regulation of neuron projection development"/>
    <property type="evidence" value="ECO:0000315"/>
    <property type="project" value="RGD"/>
</dbReference>
<dbReference type="GO" id="GO:0007399">
    <property type="term" value="P:nervous system development"/>
    <property type="evidence" value="ECO:0000314"/>
    <property type="project" value="RGD"/>
</dbReference>
<dbReference type="GO" id="GO:0051965">
    <property type="term" value="P:positive regulation of synapse assembly"/>
    <property type="evidence" value="ECO:0000266"/>
    <property type="project" value="RGD"/>
</dbReference>
<dbReference type="CDD" id="cd00096">
    <property type="entry name" value="Ig"/>
    <property type="match status" value="1"/>
</dbReference>
<dbReference type="FunFam" id="2.60.40.10:FF:001492">
    <property type="entry name" value="Adhesion molecule with Ig-like domain 3"/>
    <property type="match status" value="1"/>
</dbReference>
<dbReference type="FunFam" id="3.80.10.10:FF:000337">
    <property type="entry name" value="Adhesion molecule with Ig-like domain 3"/>
    <property type="match status" value="1"/>
</dbReference>
<dbReference type="Gene3D" id="2.60.40.10">
    <property type="entry name" value="Immunoglobulins"/>
    <property type="match status" value="1"/>
</dbReference>
<dbReference type="Gene3D" id="3.80.10.10">
    <property type="entry name" value="Ribonuclease Inhibitor"/>
    <property type="match status" value="1"/>
</dbReference>
<dbReference type="InterPro" id="IPR031283">
    <property type="entry name" value="AMIGO"/>
</dbReference>
<dbReference type="InterPro" id="IPR007110">
    <property type="entry name" value="Ig-like_dom"/>
</dbReference>
<dbReference type="InterPro" id="IPR036179">
    <property type="entry name" value="Ig-like_dom_sf"/>
</dbReference>
<dbReference type="InterPro" id="IPR013783">
    <property type="entry name" value="Ig-like_fold"/>
</dbReference>
<dbReference type="InterPro" id="IPR003599">
    <property type="entry name" value="Ig_sub"/>
</dbReference>
<dbReference type="InterPro" id="IPR003598">
    <property type="entry name" value="Ig_sub2"/>
</dbReference>
<dbReference type="InterPro" id="IPR001611">
    <property type="entry name" value="Leu-rich_rpt"/>
</dbReference>
<dbReference type="InterPro" id="IPR003591">
    <property type="entry name" value="Leu-rich_rpt_typical-subtyp"/>
</dbReference>
<dbReference type="InterPro" id="IPR032675">
    <property type="entry name" value="LRR_dom_sf"/>
</dbReference>
<dbReference type="PANTHER" id="PTHR24368">
    <property type="entry name" value="AMPHOTERIN-INDUCED PROTEIN"/>
    <property type="match status" value="1"/>
</dbReference>
<dbReference type="PANTHER" id="PTHR24368:SF62">
    <property type="entry name" value="AMPHOTERIN-INDUCED PROTEIN 3"/>
    <property type="match status" value="1"/>
</dbReference>
<dbReference type="Pfam" id="PF00560">
    <property type="entry name" value="LRR_1"/>
    <property type="match status" value="1"/>
</dbReference>
<dbReference type="Pfam" id="PF13855">
    <property type="entry name" value="LRR_8"/>
    <property type="match status" value="1"/>
</dbReference>
<dbReference type="SMART" id="SM00409">
    <property type="entry name" value="IG"/>
    <property type="match status" value="1"/>
</dbReference>
<dbReference type="SMART" id="SM00408">
    <property type="entry name" value="IGc2"/>
    <property type="match status" value="1"/>
</dbReference>
<dbReference type="SMART" id="SM00369">
    <property type="entry name" value="LRR_TYP"/>
    <property type="match status" value="6"/>
</dbReference>
<dbReference type="SUPFAM" id="SSF48726">
    <property type="entry name" value="Immunoglobulin"/>
    <property type="match status" value="1"/>
</dbReference>
<dbReference type="SUPFAM" id="SSF52058">
    <property type="entry name" value="L domain-like"/>
    <property type="match status" value="1"/>
</dbReference>
<dbReference type="PROSITE" id="PS50835">
    <property type="entry name" value="IG_LIKE"/>
    <property type="match status" value="1"/>
</dbReference>
<gene>
    <name evidence="6 7" type="primary">Amigo3</name>
    <name evidence="1" type="synonym">Ali3</name>
</gene>
<sequence length="508" mass="55565">MAWLVLLGLLLCMLGAGSGTSDLEGVLPPDPHNCPNKCVCAADVLSCAGRGLQDLPAALPATAAELDLSHNALKRLHPGWLAPLSRLRALYLGYNKLDVLGRGVFTNASGLRILDLSSNLLRRLRTYDLDGLEELEKLLLFNNRLMHLDLDAFQGLSMLSHLYLSCNELSSFSFNHLHGLGLTRLRTLDLSSNWLGHVSVPELAALPTFLKNRLYLHNNPLPCDCSLYHLLRRWHQRGLSALHDFEREYTCLAFKVAESRVRFFEHSRVFKNCSVAAAPGLELPEEELHTHVGQSLRLFCNTTVPAARVAWVSPKNELLVAPGSQDGSIAVLADGSLAIGRVQEQHAGLFVCLASGPRLHHNQTLEYNVSVHKPRPEPEAFNTGFTTLLGCIVGLVLVLLYLFAPPCRGCCRCCRRACRNRCWPRASSPLQELSAQSSVLSTTPPDAPSRKASVHKHVAFLEPGKKGLNGRVQLAVAEDFDLCNPMGLQLKAGSESASSTGSEGLMMS</sequence>
<comment type="function">
    <text evidence="4">May mediate heterophilic cell-cell interaction. May contribute to signal transduction through its intracellular domain.</text>
</comment>
<comment type="subunit">
    <text>Binds AMIGO1 or AMIGO2.</text>
</comment>
<comment type="subcellular location">
    <subcellularLocation>
        <location evidence="5">Membrane</location>
        <topology evidence="5">Single-pass type I membrane protein</topology>
    </subcellularLocation>
</comment>
<comment type="similarity">
    <text evidence="5">Belongs to the immunoglobulin superfamily. AMIGO family.</text>
</comment>
<accession>Q80ZD5</accession>
<reference evidence="5 6" key="1">
    <citation type="journal article" date="2003" name="J. Cell Biol.">
        <title>AMIGO, a transmembrane protein implicated in axon tract development, defines a novel protein family with leucine-rich repeats.</title>
        <authorList>
            <person name="Kuja-Panula J."/>
            <person name="Kiiltomaeki M."/>
            <person name="Yamashiro T."/>
            <person name="Rouhiainen A."/>
            <person name="Rauvala H."/>
        </authorList>
    </citation>
    <scope>NUCLEOTIDE SEQUENCE [MRNA]</scope>
    <scope>INTERACTION WITH AMIGO1 AND AMIGO2</scope>
    <source>
        <strain evidence="6">Wistar</strain>
    </source>
</reference>
<keyword id="KW-0130">Cell adhesion</keyword>
<keyword id="KW-1015">Disulfide bond</keyword>
<keyword id="KW-0325">Glycoprotein</keyword>
<keyword id="KW-0393">Immunoglobulin domain</keyword>
<keyword id="KW-0433">Leucine-rich repeat</keyword>
<keyword id="KW-0472">Membrane</keyword>
<keyword id="KW-1185">Reference proteome</keyword>
<keyword id="KW-0677">Repeat</keyword>
<keyword id="KW-0732">Signal</keyword>
<keyword id="KW-0812">Transmembrane</keyword>
<keyword id="KW-1133">Transmembrane helix</keyword>
<name>AMGO3_RAT</name>
<proteinExistence type="evidence at protein level"/>
<organism>
    <name type="scientific">Rattus norvegicus</name>
    <name type="common">Rat</name>
    <dbReference type="NCBI Taxonomy" id="10116"/>
    <lineage>
        <taxon>Eukaryota</taxon>
        <taxon>Metazoa</taxon>
        <taxon>Chordata</taxon>
        <taxon>Craniata</taxon>
        <taxon>Vertebrata</taxon>
        <taxon>Euteleostomi</taxon>
        <taxon>Mammalia</taxon>
        <taxon>Eutheria</taxon>
        <taxon>Euarchontoglires</taxon>
        <taxon>Glires</taxon>
        <taxon>Rodentia</taxon>
        <taxon>Myomorpha</taxon>
        <taxon>Muroidea</taxon>
        <taxon>Muridae</taxon>
        <taxon>Murinae</taxon>
        <taxon>Rattus</taxon>
    </lineage>
</organism>
<evidence type="ECO:0000250" key="1">
    <source>
        <dbReference type="UniProtKB" id="Q8C2S7"/>
    </source>
</evidence>
<evidence type="ECO:0000255" key="2"/>
<evidence type="ECO:0000255" key="3">
    <source>
        <dbReference type="PROSITE-ProRule" id="PRU00114"/>
    </source>
</evidence>
<evidence type="ECO:0000303" key="4">
    <source>
    </source>
</evidence>
<evidence type="ECO:0000305" key="5"/>
<evidence type="ECO:0000312" key="6">
    <source>
        <dbReference type="EMBL" id="AAO48952.1"/>
    </source>
</evidence>
<evidence type="ECO:0000312" key="7">
    <source>
        <dbReference type="RGD" id="631413"/>
    </source>
</evidence>
<protein>
    <recommendedName>
        <fullName>Amphoterin-induced protein 3</fullName>
    </recommendedName>
    <alternativeName>
        <fullName>AMIGO-3</fullName>
    </alternativeName>
    <alternativeName>
        <fullName>Alivin-3</fullName>
    </alternativeName>
</protein>